<dbReference type="EMBL" id="BA000031">
    <property type="protein sequence ID" value="BAC60362.1"/>
    <property type="molecule type" value="Genomic_DNA"/>
</dbReference>
<dbReference type="RefSeq" id="NP_798478.1">
    <property type="nucleotide sequence ID" value="NC_004603.1"/>
</dbReference>
<dbReference type="SMR" id="Q87MX7"/>
<dbReference type="KEGG" id="vpa:VP2099"/>
<dbReference type="PATRIC" id="fig|223926.6.peg.2010"/>
<dbReference type="eggNOG" id="COG2204">
    <property type="taxonomic scope" value="Bacteria"/>
</dbReference>
<dbReference type="HOGENOM" id="CLU_000445_0_6_6"/>
<dbReference type="Proteomes" id="UP000002493">
    <property type="component" value="Chromosome 1"/>
</dbReference>
<dbReference type="GO" id="GO:0005524">
    <property type="term" value="F:ATP binding"/>
    <property type="evidence" value="ECO:0007669"/>
    <property type="project" value="UniProtKB-KW"/>
</dbReference>
<dbReference type="GO" id="GO:0016887">
    <property type="term" value="F:ATP hydrolysis activity"/>
    <property type="evidence" value="ECO:0007669"/>
    <property type="project" value="InterPro"/>
</dbReference>
<dbReference type="GO" id="GO:0043565">
    <property type="term" value="F:sequence-specific DNA binding"/>
    <property type="evidence" value="ECO:0007669"/>
    <property type="project" value="InterPro"/>
</dbReference>
<dbReference type="GO" id="GO:0000160">
    <property type="term" value="P:phosphorelay signal transduction system"/>
    <property type="evidence" value="ECO:0007669"/>
    <property type="project" value="UniProtKB-KW"/>
</dbReference>
<dbReference type="GO" id="GO:0006355">
    <property type="term" value="P:regulation of DNA-templated transcription"/>
    <property type="evidence" value="ECO:0007669"/>
    <property type="project" value="InterPro"/>
</dbReference>
<dbReference type="CDD" id="cd00009">
    <property type="entry name" value="AAA"/>
    <property type="match status" value="1"/>
</dbReference>
<dbReference type="CDD" id="cd17572">
    <property type="entry name" value="REC_NtrC1-like"/>
    <property type="match status" value="1"/>
</dbReference>
<dbReference type="FunFam" id="3.40.50.300:FF:000006">
    <property type="entry name" value="DNA-binding transcriptional regulator NtrC"/>
    <property type="match status" value="1"/>
</dbReference>
<dbReference type="FunFam" id="1.10.10.60:FF:000343">
    <property type="entry name" value="Sigma-54-dependent Fis family transcriptional regulator"/>
    <property type="match status" value="1"/>
</dbReference>
<dbReference type="FunFam" id="1.10.8.60:FF:000120">
    <property type="entry name" value="Sigma-54-dependent Fis family transcriptional regulator"/>
    <property type="match status" value="1"/>
</dbReference>
<dbReference type="FunFam" id="3.40.50.2300:FF:000225">
    <property type="entry name" value="Sigma-54-dependent Fis family transcriptional regulator"/>
    <property type="match status" value="1"/>
</dbReference>
<dbReference type="Gene3D" id="1.10.8.60">
    <property type="match status" value="1"/>
</dbReference>
<dbReference type="Gene3D" id="3.40.50.2300">
    <property type="match status" value="1"/>
</dbReference>
<dbReference type="Gene3D" id="1.10.10.60">
    <property type="entry name" value="Homeodomain-like"/>
    <property type="match status" value="1"/>
</dbReference>
<dbReference type="Gene3D" id="3.40.50.300">
    <property type="entry name" value="P-loop containing nucleotide triphosphate hydrolases"/>
    <property type="match status" value="1"/>
</dbReference>
<dbReference type="InterPro" id="IPR003593">
    <property type="entry name" value="AAA+_ATPase"/>
</dbReference>
<dbReference type="InterPro" id="IPR011006">
    <property type="entry name" value="CheY-like_superfamily"/>
</dbReference>
<dbReference type="InterPro" id="IPR009057">
    <property type="entry name" value="Homeodomain-like_sf"/>
</dbReference>
<dbReference type="InterPro" id="IPR002197">
    <property type="entry name" value="HTH_Fis"/>
</dbReference>
<dbReference type="InterPro" id="IPR027417">
    <property type="entry name" value="P-loop_NTPase"/>
</dbReference>
<dbReference type="InterPro" id="IPR053402">
    <property type="entry name" value="QS_regulatory_LuxO"/>
</dbReference>
<dbReference type="InterPro" id="IPR001789">
    <property type="entry name" value="Sig_transdc_resp-reg_receiver"/>
</dbReference>
<dbReference type="InterPro" id="IPR002078">
    <property type="entry name" value="Sigma_54_int"/>
</dbReference>
<dbReference type="InterPro" id="IPR025943">
    <property type="entry name" value="Sigma_54_int_dom_ATP-bd_2"/>
</dbReference>
<dbReference type="InterPro" id="IPR025944">
    <property type="entry name" value="Sigma_54_int_dom_CS"/>
</dbReference>
<dbReference type="NCBIfam" id="NF041946">
    <property type="entry name" value="LuxO_transreg_Vib"/>
    <property type="match status" value="1"/>
</dbReference>
<dbReference type="PANTHER" id="PTHR32071:SF117">
    <property type="entry name" value="PTS-DEPENDENT DIHYDROXYACETONE KINASE OPERON REGULATORY PROTEIN-RELATED"/>
    <property type="match status" value="1"/>
</dbReference>
<dbReference type="PANTHER" id="PTHR32071">
    <property type="entry name" value="TRANSCRIPTIONAL REGULATORY PROTEIN"/>
    <property type="match status" value="1"/>
</dbReference>
<dbReference type="Pfam" id="PF02954">
    <property type="entry name" value="HTH_8"/>
    <property type="match status" value="1"/>
</dbReference>
<dbReference type="Pfam" id="PF00072">
    <property type="entry name" value="Response_reg"/>
    <property type="match status" value="1"/>
</dbReference>
<dbReference type="Pfam" id="PF00158">
    <property type="entry name" value="Sigma54_activat"/>
    <property type="match status" value="1"/>
</dbReference>
<dbReference type="SMART" id="SM00382">
    <property type="entry name" value="AAA"/>
    <property type="match status" value="1"/>
</dbReference>
<dbReference type="SMART" id="SM00448">
    <property type="entry name" value="REC"/>
    <property type="match status" value="1"/>
</dbReference>
<dbReference type="SUPFAM" id="SSF52172">
    <property type="entry name" value="CheY-like"/>
    <property type="match status" value="1"/>
</dbReference>
<dbReference type="SUPFAM" id="SSF46689">
    <property type="entry name" value="Homeodomain-like"/>
    <property type="match status" value="1"/>
</dbReference>
<dbReference type="SUPFAM" id="SSF52540">
    <property type="entry name" value="P-loop containing nucleoside triphosphate hydrolases"/>
    <property type="match status" value="1"/>
</dbReference>
<dbReference type="PROSITE" id="PS50110">
    <property type="entry name" value="RESPONSE_REGULATORY"/>
    <property type="match status" value="1"/>
</dbReference>
<dbReference type="PROSITE" id="PS00676">
    <property type="entry name" value="SIGMA54_INTERACT_2"/>
    <property type="match status" value="1"/>
</dbReference>
<dbReference type="PROSITE" id="PS00688">
    <property type="entry name" value="SIGMA54_INTERACT_3"/>
    <property type="match status" value="1"/>
</dbReference>
<dbReference type="PROSITE" id="PS50045">
    <property type="entry name" value="SIGMA54_INTERACT_4"/>
    <property type="match status" value="1"/>
</dbReference>
<reference key="1">
    <citation type="journal article" date="2003" name="Lancet">
        <title>Genome sequence of Vibrio parahaemolyticus: a pathogenic mechanism distinct from that of V. cholerae.</title>
        <authorList>
            <person name="Makino K."/>
            <person name="Oshima K."/>
            <person name="Kurokawa K."/>
            <person name="Yokoyama K."/>
            <person name="Uda T."/>
            <person name="Tagomori K."/>
            <person name="Iijima Y."/>
            <person name="Najima M."/>
            <person name="Nakano M."/>
            <person name="Yamashita A."/>
            <person name="Kubota Y."/>
            <person name="Kimura S."/>
            <person name="Yasunaga T."/>
            <person name="Honda T."/>
            <person name="Shinagawa H."/>
            <person name="Hattori M."/>
            <person name="Iida T."/>
        </authorList>
    </citation>
    <scope>NUCLEOTIDE SEQUENCE [LARGE SCALE GENOMIC DNA]</scope>
    <source>
        <strain>RIMD 2210633</strain>
    </source>
</reference>
<feature type="chain" id="PRO_0000081118" description="Regulatory protein LuxO">
    <location>
        <begin position="1"/>
        <end position="453"/>
    </location>
</feature>
<feature type="domain" description="Response regulatory" evidence="2">
    <location>
        <begin position="1"/>
        <end position="112"/>
    </location>
</feature>
<feature type="domain" description="Sigma-54 factor interaction" evidence="3">
    <location>
        <begin position="133"/>
        <end position="362"/>
    </location>
</feature>
<feature type="binding site" evidence="3">
    <location>
        <begin position="161"/>
        <end position="168"/>
    </location>
    <ligand>
        <name>ATP</name>
        <dbReference type="ChEBI" id="CHEBI:30616"/>
    </ligand>
</feature>
<feature type="binding site" evidence="3">
    <location>
        <begin position="224"/>
        <end position="233"/>
    </location>
    <ligand>
        <name>ATP</name>
        <dbReference type="ChEBI" id="CHEBI:30616"/>
    </ligand>
</feature>
<feature type="modified residue" description="4-aspartylphosphate" evidence="2">
    <location>
        <position position="47"/>
    </location>
</feature>
<sequence length="453" mass="50482">MVEDTASVAALYRSYLTPLGIDINIVGTGRDAIESLNHRIPDLILLDLRLPDMTGMDVLHAVKKSHPDVPIIFMTAHGSIDTAVEAMRHGSQDFLIKPCEADRLRVTVNNAIRKATKLKNEADNPGNQNYQGFIGSSQTMQQVYRTIDSAASSKASIFITGESGTGKEVCAEAIHAASKRGDKPFIAINCAAIPKDLIESELFGHVKGAFTGAANDRQGAAELADGGTLFLDELCEMDLDLQTKLLRFIQTGTFQKVGSSKMKSVDVRFVCATNRDPWKEVQEGRFREDLYYRLYVIPLHLPPLRERGEDVIEIAYSLLGYMSHEEGKNFVRFSQEVIDRFNSYEWPGNVRQLQNVLRNIVVLNNGKEITLDMLPPPLNQPLDRPSVSKLIEPKAMTVSEIMPLWMTEKMAIEQAIEACDGNIPRAAGYLDVSPSTIYRKLQAWNGKEERQKV</sequence>
<keyword id="KW-0067">ATP-binding</keyword>
<keyword id="KW-0238">DNA-binding</keyword>
<keyword id="KW-0547">Nucleotide-binding</keyword>
<keyword id="KW-0597">Phosphoprotein</keyword>
<keyword id="KW-0678">Repressor</keyword>
<keyword id="KW-0804">Transcription</keyword>
<keyword id="KW-0805">Transcription regulation</keyword>
<keyword id="KW-0902">Two-component regulatory system</keyword>
<evidence type="ECO:0000250" key="1"/>
<evidence type="ECO:0000255" key="2">
    <source>
        <dbReference type="PROSITE-ProRule" id="PRU00169"/>
    </source>
</evidence>
<evidence type="ECO:0000255" key="3">
    <source>
        <dbReference type="PROSITE-ProRule" id="PRU00193"/>
    </source>
</evidence>
<name>LUXO_VIBPA</name>
<comment type="function">
    <text evidence="1">Involved in the regulation of different processes depending on the cell density. Acts together with sigma-54 to repress, perhaps indirectly, some genes (By similarity).</text>
</comment>
<accession>Q87MX7</accession>
<proteinExistence type="inferred from homology"/>
<gene>
    <name type="primary">luxO</name>
    <name type="ordered locus">VP2099</name>
</gene>
<protein>
    <recommendedName>
        <fullName>Regulatory protein LuxO</fullName>
    </recommendedName>
</protein>
<organism>
    <name type="scientific">Vibrio parahaemolyticus serotype O3:K6 (strain RIMD 2210633)</name>
    <dbReference type="NCBI Taxonomy" id="223926"/>
    <lineage>
        <taxon>Bacteria</taxon>
        <taxon>Pseudomonadati</taxon>
        <taxon>Pseudomonadota</taxon>
        <taxon>Gammaproteobacteria</taxon>
        <taxon>Vibrionales</taxon>
        <taxon>Vibrionaceae</taxon>
        <taxon>Vibrio</taxon>
    </lineage>
</organism>